<proteinExistence type="inferred from homology"/>
<sequence>MTTENDLLNRIAELETKVAFQEITLEELNQALIHHQLALDKLQTQMRHFAEKLKGAQVSNIASQAEETPPPHY</sequence>
<comment type="similarity">
    <text evidence="1">Belongs to the SlyX family.</text>
</comment>
<reference key="1">
    <citation type="submission" date="2008-06" db="EMBL/GenBank/DDBJ databases">
        <title>Genome and proteome analysis of A. pleuropneumoniae serotype 7.</title>
        <authorList>
            <person name="Linke B."/>
            <person name="Buettner F."/>
            <person name="Martinez-Arias R."/>
            <person name="Goesmann A."/>
            <person name="Baltes N."/>
            <person name="Tegetmeyer H."/>
            <person name="Singh M."/>
            <person name="Gerlach G.F."/>
        </authorList>
    </citation>
    <scope>NUCLEOTIDE SEQUENCE [LARGE SCALE GENOMIC DNA]</scope>
    <source>
        <strain>AP76</strain>
    </source>
</reference>
<evidence type="ECO:0000255" key="1">
    <source>
        <dbReference type="HAMAP-Rule" id="MF_00715"/>
    </source>
</evidence>
<gene>
    <name evidence="1" type="primary">slyX</name>
    <name type="ordered locus">APP7_1701</name>
</gene>
<feature type="chain" id="PRO_1000195828" description="Protein SlyX homolog">
    <location>
        <begin position="1"/>
        <end position="73"/>
    </location>
</feature>
<organism>
    <name type="scientific">Actinobacillus pleuropneumoniae serotype 7 (strain AP76)</name>
    <dbReference type="NCBI Taxonomy" id="537457"/>
    <lineage>
        <taxon>Bacteria</taxon>
        <taxon>Pseudomonadati</taxon>
        <taxon>Pseudomonadota</taxon>
        <taxon>Gammaproteobacteria</taxon>
        <taxon>Pasteurellales</taxon>
        <taxon>Pasteurellaceae</taxon>
        <taxon>Actinobacillus</taxon>
    </lineage>
</organism>
<name>SLYX_ACTP7</name>
<protein>
    <recommendedName>
        <fullName evidence="1">Protein SlyX homolog</fullName>
    </recommendedName>
</protein>
<accession>B3H2N6</accession>
<dbReference type="EMBL" id="CP001091">
    <property type="protein sequence ID" value="ACE62353.1"/>
    <property type="molecule type" value="Genomic_DNA"/>
</dbReference>
<dbReference type="RefSeq" id="WP_005599039.1">
    <property type="nucleotide sequence ID" value="NC_010939.1"/>
</dbReference>
<dbReference type="SMR" id="B3H2N6"/>
<dbReference type="KEGG" id="apa:APP7_1701"/>
<dbReference type="HOGENOM" id="CLU_180796_4_2_6"/>
<dbReference type="Proteomes" id="UP000001226">
    <property type="component" value="Chromosome"/>
</dbReference>
<dbReference type="Gene3D" id="1.20.5.300">
    <property type="match status" value="1"/>
</dbReference>
<dbReference type="HAMAP" id="MF_00715">
    <property type="entry name" value="SlyX"/>
    <property type="match status" value="1"/>
</dbReference>
<dbReference type="InterPro" id="IPR007236">
    <property type="entry name" value="SlyX"/>
</dbReference>
<dbReference type="NCBIfam" id="NF002556">
    <property type="entry name" value="PRK02119.1"/>
    <property type="match status" value="1"/>
</dbReference>
<dbReference type="PANTHER" id="PTHR36508">
    <property type="entry name" value="PROTEIN SLYX"/>
    <property type="match status" value="1"/>
</dbReference>
<dbReference type="PANTHER" id="PTHR36508:SF1">
    <property type="entry name" value="PROTEIN SLYX"/>
    <property type="match status" value="1"/>
</dbReference>
<dbReference type="Pfam" id="PF04102">
    <property type="entry name" value="SlyX"/>
    <property type="match status" value="1"/>
</dbReference>